<accession>Q3UJD6</accession>
<accession>Q3TAC9</accession>
<accession>Q3TUE6</accession>
<accession>Q6P9T0</accession>
<accession>Q80TP5</accession>
<accession>Q80ZW5</accession>
<name>UBP19_MOUSE</name>
<feature type="chain" id="PRO_0000295157" description="Ubiquitin carboxyl-terminal hydrolase 19">
    <location>
        <begin position="1"/>
        <end position="1360"/>
    </location>
</feature>
<feature type="topological domain" description="Cytoplasmic" evidence="4">
    <location>
        <begin position="1"/>
        <end position="1333"/>
    </location>
</feature>
<feature type="transmembrane region" description="Helical" evidence="4">
    <location>
        <begin position="1334"/>
        <end position="1354"/>
    </location>
</feature>
<feature type="topological domain" description="Lumenal" evidence="4">
    <location>
        <begin position="1355"/>
        <end position="1360"/>
    </location>
</feature>
<feature type="domain" description="CS 1" evidence="6">
    <location>
        <begin position="51"/>
        <end position="140"/>
    </location>
</feature>
<feature type="domain" description="CS 2" evidence="6">
    <location>
        <begin position="322"/>
        <end position="424"/>
    </location>
</feature>
<feature type="domain" description="USP">
    <location>
        <begin position="539"/>
        <end position="1256"/>
    </location>
</feature>
<feature type="zinc finger region" description="MYND-type" evidence="5">
    <location>
        <begin position="833"/>
        <end position="875"/>
    </location>
</feature>
<feature type="region of interest" description="Disordered" evidence="9">
    <location>
        <begin position="1"/>
        <end position="46"/>
    </location>
</feature>
<feature type="region of interest" description="Disordered" evidence="9">
    <location>
        <begin position="163"/>
        <end position="239"/>
    </location>
</feature>
<feature type="region of interest" description="Disordered" evidence="9">
    <location>
        <begin position="432"/>
        <end position="482"/>
    </location>
</feature>
<feature type="region of interest" description="Disordered" evidence="9">
    <location>
        <begin position="965"/>
        <end position="988"/>
    </location>
</feature>
<feature type="region of interest" description="Disordered" evidence="9">
    <location>
        <begin position="1259"/>
        <end position="1281"/>
    </location>
</feature>
<feature type="compositionally biased region" description="Basic and acidic residues" evidence="9">
    <location>
        <begin position="28"/>
        <end position="46"/>
    </location>
</feature>
<feature type="compositionally biased region" description="Basic and acidic residues" evidence="9">
    <location>
        <begin position="170"/>
        <end position="181"/>
    </location>
</feature>
<feature type="compositionally biased region" description="Gly residues" evidence="9">
    <location>
        <begin position="189"/>
        <end position="199"/>
    </location>
</feature>
<feature type="compositionally biased region" description="Basic and acidic residues" evidence="9">
    <location>
        <begin position="462"/>
        <end position="478"/>
    </location>
</feature>
<feature type="compositionally biased region" description="Basic and acidic residues" evidence="9">
    <location>
        <begin position="1259"/>
        <end position="1274"/>
    </location>
</feature>
<feature type="active site" description="Nucleophile" evidence="7 8">
    <location>
        <position position="548"/>
    </location>
</feature>
<feature type="active site" description="Proton acceptor" evidence="7 8">
    <location>
        <position position="1207"/>
    </location>
</feature>
<feature type="binding site" evidence="5">
    <location>
        <position position="833"/>
    </location>
    <ligand>
        <name>Zn(2+)</name>
        <dbReference type="ChEBI" id="CHEBI:29105"/>
        <label>1</label>
    </ligand>
</feature>
<feature type="binding site" evidence="5">
    <location>
        <position position="836"/>
    </location>
    <ligand>
        <name>Zn(2+)</name>
        <dbReference type="ChEBI" id="CHEBI:29105"/>
        <label>1</label>
    </ligand>
</feature>
<feature type="binding site" evidence="5">
    <location>
        <position position="850"/>
    </location>
    <ligand>
        <name>Zn(2+)</name>
        <dbReference type="ChEBI" id="CHEBI:29105"/>
        <label>2</label>
    </ligand>
</feature>
<feature type="binding site" evidence="5">
    <location>
        <position position="853"/>
    </location>
    <ligand>
        <name>Zn(2+)</name>
        <dbReference type="ChEBI" id="CHEBI:29105"/>
        <label>2</label>
    </ligand>
</feature>
<feature type="binding site" evidence="5">
    <location>
        <position position="859"/>
    </location>
    <ligand>
        <name>Zn(2+)</name>
        <dbReference type="ChEBI" id="CHEBI:29105"/>
        <label>1</label>
    </ligand>
</feature>
<feature type="binding site" evidence="5">
    <location>
        <position position="863"/>
    </location>
    <ligand>
        <name>Zn(2+)</name>
        <dbReference type="ChEBI" id="CHEBI:29105"/>
        <label>1</label>
    </ligand>
</feature>
<feature type="binding site" evidence="5">
    <location>
        <position position="871"/>
    </location>
    <ligand>
        <name>Zn(2+)</name>
        <dbReference type="ChEBI" id="CHEBI:29105"/>
        <label>2</label>
    </ligand>
</feature>
<feature type="binding site" evidence="5">
    <location>
        <position position="875"/>
    </location>
    <ligand>
        <name>Zn(2+)</name>
        <dbReference type="ChEBI" id="CHEBI:29105"/>
        <label>2</label>
    </ligand>
</feature>
<feature type="modified residue" description="Phosphoserine" evidence="20">
    <location>
        <position position="220"/>
    </location>
</feature>
<feature type="splice variant" id="VSP_026769" description="In isoform 2." evidence="16 17 18">
    <original>ASRIWQELEAEEEMVPEGPGPLGPWGPQDWVGPPPRGPTTPDEGCLRYFVLGTVA</original>
    <variation>GLGPGQAPEVAPTRTAPERFAPPVDRPAPTYSNMEEVD</variation>
    <location>
        <begin position="1286"/>
        <end position="1340"/>
    </location>
</feature>
<feature type="splice variant" id="VSP_026770" description="In isoform 2." evidence="16 17 18">
    <location>
        <begin position="1341"/>
        <end position="1360"/>
    </location>
</feature>
<feature type="mutagenesis site" description="Enzymatically inactive mutant." evidence="11 13">
    <original>C</original>
    <variation>S</variation>
    <location>
        <position position="548"/>
    </location>
</feature>
<feature type="sequence conflict" description="In Ref. 2; BAE42739." evidence="19" ref="2">
    <original>L</original>
    <variation>LK</variation>
    <location>
        <position position="140"/>
    </location>
</feature>
<feature type="sequence conflict" description="In Ref. 3; AAH60613." evidence="19" ref="3">
    <original>P</original>
    <variation>S</variation>
    <location>
        <position position="142"/>
    </location>
</feature>
<feature type="sequence conflict" description="In Ref. 2; BAE42739." evidence="19" ref="2">
    <location>
        <begin position="430"/>
        <end position="431"/>
    </location>
</feature>
<feature type="sequence conflict" description="In Ref. 2; BAE42739." evidence="19" ref="2">
    <original>A</original>
    <variation>T</variation>
    <location>
        <position position="669"/>
    </location>
</feature>
<feature type="sequence conflict" description="In Ref. 2; BAE42739." evidence="19" ref="2">
    <original>D</original>
    <variation>E</variation>
    <location>
        <position position="1058"/>
    </location>
</feature>
<reference key="1">
    <citation type="journal article" date="2003" name="DNA Res.">
        <title>Prediction of the coding sequences of mouse homologues of KIAA gene: II. The complete nucleotide sequences of 400 mouse KIAA-homologous cDNAs identified by screening of terminal sequences of cDNA clones randomly sampled from size-fractionated libraries.</title>
        <authorList>
            <person name="Okazaki N."/>
            <person name="Kikuno R."/>
            <person name="Ohara R."/>
            <person name="Inamoto S."/>
            <person name="Aizawa H."/>
            <person name="Yuasa S."/>
            <person name="Nakajima D."/>
            <person name="Nagase T."/>
            <person name="Ohara O."/>
            <person name="Koga H."/>
        </authorList>
    </citation>
    <scope>NUCLEOTIDE SEQUENCE [LARGE SCALE MRNA] (ISOFORM 2)</scope>
    <source>
        <tissue>Fetal brain</tissue>
    </source>
</reference>
<reference key="2">
    <citation type="journal article" date="2005" name="Science">
        <title>The transcriptional landscape of the mammalian genome.</title>
        <authorList>
            <person name="Carninci P."/>
            <person name="Kasukawa T."/>
            <person name="Katayama S."/>
            <person name="Gough J."/>
            <person name="Frith M.C."/>
            <person name="Maeda N."/>
            <person name="Oyama R."/>
            <person name="Ravasi T."/>
            <person name="Lenhard B."/>
            <person name="Wells C."/>
            <person name="Kodzius R."/>
            <person name="Shimokawa K."/>
            <person name="Bajic V.B."/>
            <person name="Brenner S.E."/>
            <person name="Batalov S."/>
            <person name="Forrest A.R."/>
            <person name="Zavolan M."/>
            <person name="Davis M.J."/>
            <person name="Wilming L.G."/>
            <person name="Aidinis V."/>
            <person name="Allen J.E."/>
            <person name="Ambesi-Impiombato A."/>
            <person name="Apweiler R."/>
            <person name="Aturaliya R.N."/>
            <person name="Bailey T.L."/>
            <person name="Bansal M."/>
            <person name="Baxter L."/>
            <person name="Beisel K.W."/>
            <person name="Bersano T."/>
            <person name="Bono H."/>
            <person name="Chalk A.M."/>
            <person name="Chiu K.P."/>
            <person name="Choudhary V."/>
            <person name="Christoffels A."/>
            <person name="Clutterbuck D.R."/>
            <person name="Crowe M.L."/>
            <person name="Dalla E."/>
            <person name="Dalrymple B.P."/>
            <person name="de Bono B."/>
            <person name="Della Gatta G."/>
            <person name="di Bernardo D."/>
            <person name="Down T."/>
            <person name="Engstrom P."/>
            <person name="Fagiolini M."/>
            <person name="Faulkner G."/>
            <person name="Fletcher C.F."/>
            <person name="Fukushima T."/>
            <person name="Furuno M."/>
            <person name="Futaki S."/>
            <person name="Gariboldi M."/>
            <person name="Georgii-Hemming P."/>
            <person name="Gingeras T.R."/>
            <person name="Gojobori T."/>
            <person name="Green R.E."/>
            <person name="Gustincich S."/>
            <person name="Harbers M."/>
            <person name="Hayashi Y."/>
            <person name="Hensch T.K."/>
            <person name="Hirokawa N."/>
            <person name="Hill D."/>
            <person name="Huminiecki L."/>
            <person name="Iacono M."/>
            <person name="Ikeo K."/>
            <person name="Iwama A."/>
            <person name="Ishikawa T."/>
            <person name="Jakt M."/>
            <person name="Kanapin A."/>
            <person name="Katoh M."/>
            <person name="Kawasawa Y."/>
            <person name="Kelso J."/>
            <person name="Kitamura H."/>
            <person name="Kitano H."/>
            <person name="Kollias G."/>
            <person name="Krishnan S.P."/>
            <person name="Kruger A."/>
            <person name="Kummerfeld S.K."/>
            <person name="Kurochkin I.V."/>
            <person name="Lareau L.F."/>
            <person name="Lazarevic D."/>
            <person name="Lipovich L."/>
            <person name="Liu J."/>
            <person name="Liuni S."/>
            <person name="McWilliam S."/>
            <person name="Madan Babu M."/>
            <person name="Madera M."/>
            <person name="Marchionni L."/>
            <person name="Matsuda H."/>
            <person name="Matsuzawa S."/>
            <person name="Miki H."/>
            <person name="Mignone F."/>
            <person name="Miyake S."/>
            <person name="Morris K."/>
            <person name="Mottagui-Tabar S."/>
            <person name="Mulder N."/>
            <person name="Nakano N."/>
            <person name="Nakauchi H."/>
            <person name="Ng P."/>
            <person name="Nilsson R."/>
            <person name="Nishiguchi S."/>
            <person name="Nishikawa S."/>
            <person name="Nori F."/>
            <person name="Ohara O."/>
            <person name="Okazaki Y."/>
            <person name="Orlando V."/>
            <person name="Pang K.C."/>
            <person name="Pavan W.J."/>
            <person name="Pavesi G."/>
            <person name="Pesole G."/>
            <person name="Petrovsky N."/>
            <person name="Piazza S."/>
            <person name="Reed J."/>
            <person name="Reid J.F."/>
            <person name="Ring B.Z."/>
            <person name="Ringwald M."/>
            <person name="Rost B."/>
            <person name="Ruan Y."/>
            <person name="Salzberg S.L."/>
            <person name="Sandelin A."/>
            <person name="Schneider C."/>
            <person name="Schoenbach C."/>
            <person name="Sekiguchi K."/>
            <person name="Semple C.A."/>
            <person name="Seno S."/>
            <person name="Sessa L."/>
            <person name="Sheng Y."/>
            <person name="Shibata Y."/>
            <person name="Shimada H."/>
            <person name="Shimada K."/>
            <person name="Silva D."/>
            <person name="Sinclair B."/>
            <person name="Sperling S."/>
            <person name="Stupka E."/>
            <person name="Sugiura K."/>
            <person name="Sultana R."/>
            <person name="Takenaka Y."/>
            <person name="Taki K."/>
            <person name="Tammoja K."/>
            <person name="Tan S.L."/>
            <person name="Tang S."/>
            <person name="Taylor M.S."/>
            <person name="Tegner J."/>
            <person name="Teichmann S.A."/>
            <person name="Ueda H.R."/>
            <person name="van Nimwegen E."/>
            <person name="Verardo R."/>
            <person name="Wei C.L."/>
            <person name="Yagi K."/>
            <person name="Yamanishi H."/>
            <person name="Zabarovsky E."/>
            <person name="Zhu S."/>
            <person name="Zimmer A."/>
            <person name="Hide W."/>
            <person name="Bult C."/>
            <person name="Grimmond S.M."/>
            <person name="Teasdale R.D."/>
            <person name="Liu E.T."/>
            <person name="Brusic V."/>
            <person name="Quackenbush J."/>
            <person name="Wahlestedt C."/>
            <person name="Mattick J.S."/>
            <person name="Hume D.A."/>
            <person name="Kai C."/>
            <person name="Sasaki D."/>
            <person name="Tomaru Y."/>
            <person name="Fukuda S."/>
            <person name="Kanamori-Katayama M."/>
            <person name="Suzuki M."/>
            <person name="Aoki J."/>
            <person name="Arakawa T."/>
            <person name="Iida J."/>
            <person name="Imamura K."/>
            <person name="Itoh M."/>
            <person name="Kato T."/>
            <person name="Kawaji H."/>
            <person name="Kawagashira N."/>
            <person name="Kawashima T."/>
            <person name="Kojima M."/>
            <person name="Kondo S."/>
            <person name="Konno H."/>
            <person name="Nakano K."/>
            <person name="Ninomiya N."/>
            <person name="Nishio T."/>
            <person name="Okada M."/>
            <person name="Plessy C."/>
            <person name="Shibata K."/>
            <person name="Shiraki T."/>
            <person name="Suzuki S."/>
            <person name="Tagami M."/>
            <person name="Waki K."/>
            <person name="Watahiki A."/>
            <person name="Okamura-Oho Y."/>
            <person name="Suzuki H."/>
            <person name="Kawai J."/>
            <person name="Hayashizaki Y."/>
        </authorList>
    </citation>
    <scope>NUCLEOTIDE SEQUENCE [LARGE SCALE MRNA] (ISOFORMS 1 AND 2)</scope>
    <source>
        <strain>C57BL/6J</strain>
        <strain>NOD</strain>
        <tissue>Head</tissue>
        <tissue>Kidney</tissue>
        <tissue>Spleen</tissue>
    </source>
</reference>
<reference key="3">
    <citation type="journal article" date="2004" name="Genome Res.">
        <title>The status, quality, and expansion of the NIH full-length cDNA project: the Mammalian Gene Collection (MGC).</title>
        <authorList>
            <consortium name="The MGC Project Team"/>
        </authorList>
    </citation>
    <scope>NUCLEOTIDE SEQUENCE [LARGE SCALE MRNA] (ISOFORM 1)</scope>
    <scope>NUCLEOTIDE SEQUENCE [LARGE SCALE MRNA] OF 395-1360 (ISOFORM 2)</scope>
    <source>
        <strain>C57BL/6J</strain>
        <tissue>Brain</tissue>
    </source>
</reference>
<reference key="4">
    <citation type="journal article" date="2010" name="Cell">
        <title>A tissue-specific atlas of mouse protein phosphorylation and expression.</title>
        <authorList>
            <person name="Huttlin E.L."/>
            <person name="Jedrychowski M.P."/>
            <person name="Elias J.E."/>
            <person name="Goswami T."/>
            <person name="Rad R."/>
            <person name="Beausoleil S.A."/>
            <person name="Villen J."/>
            <person name="Haas W."/>
            <person name="Sowa M.E."/>
            <person name="Gygi S.P."/>
        </authorList>
    </citation>
    <scope>PHOSPHORYLATION [LARGE SCALE ANALYSIS] AT SER-220</scope>
    <scope>IDENTIFICATION BY MASS SPECTROMETRY [LARGE SCALE ANALYSIS]</scope>
    <source>
        <tissue>Brain</tissue>
        <tissue>Brown adipose tissue</tissue>
        <tissue>Heart</tissue>
        <tissue>Kidney</tissue>
        <tissue>Liver</tissue>
        <tissue>Lung</tissue>
        <tissue>Pancreas</tissue>
        <tissue>Spleen</tissue>
        <tissue>Testis</tissue>
    </source>
</reference>
<reference key="5">
    <citation type="journal article" date="2011" name="J. Biol. Chem.">
        <title>17beta-estradiol represses myogenic differentiation by increasing ubiquitin-specific peptidase 19 through estrogen receptor alpha.</title>
        <authorList>
            <person name="Ogawa M."/>
            <person name="Yamaji R."/>
            <person name="Higashimura Y."/>
            <person name="Harada N."/>
            <person name="Ashida H."/>
            <person name="Nakano Y."/>
            <person name="Inui H."/>
        </authorList>
    </citation>
    <scope>FUNCTION</scope>
    <scope>INDUCTION</scope>
</reference>
<reference key="6">
    <citation type="journal article" date="2014" name="Exp. Cell Res.">
        <title>Ubiquitin-specific protease 19 regulates the stability of the E3 ubiquitin ligase MARCH6.</title>
        <authorList>
            <person name="Nakamura N."/>
            <person name="Harada K."/>
            <person name="Kato M."/>
            <person name="Hirose S."/>
        </authorList>
    </citation>
    <scope>FUNCTION</scope>
    <scope>MUTAGENESIS OF CYS-548</scope>
    <scope>CATALYTIC ACTIVITY</scope>
</reference>
<reference key="7">
    <citation type="journal article" date="2015" name="Mol. Biol. Cell">
        <title>USP19 deubiquitinating enzyme inhibits muscle cell differentiation by suppressing unfolded-protein response signaling.</title>
        <authorList>
            <person name="Wiles B."/>
            <person name="Miao M."/>
            <person name="Coyne E."/>
            <person name="Larose L."/>
            <person name="Cybulsky A.V."/>
            <person name="Wing S.S."/>
        </authorList>
    </citation>
    <scope>FUNCTION</scope>
    <scope>DISRUPTION PHENOTYPE</scope>
    <scope>SUBCELLULAR LOCATION</scope>
</reference>
<reference key="8">
    <citation type="journal article" date="2016" name="Int. J. Mol. Sci.">
        <title>USP19-Mediated Deubiquitination Facilitates the Stabilization of HRD1 Ubiquitin Ligase.</title>
        <authorList>
            <person name="Harada K."/>
            <person name="Kato M."/>
            <person name="Nakamura N."/>
        </authorList>
    </citation>
    <scope>FUNCTION</scope>
    <scope>MUTAGENESIS OF CYS-548</scope>
    <scope>CATALYTIC ACTIVITY</scope>
</reference>
<reference key="9">
    <citation type="journal article" date="2017" name="Sci. Rep.">
        <title>HSP90 recognizes the N-terminus of huntingtin involved in regulation of huntingtin aggregation by USP19.</title>
        <authorList>
            <person name="He W.T."/>
            <person name="Xue W."/>
            <person name="Gao Y.G."/>
            <person name="Hong J.Y."/>
            <person name="Yue H.W."/>
            <person name="Jiang L.L."/>
            <person name="Hu H.Y."/>
        </authorList>
    </citation>
    <scope>FUNCTION</scope>
</reference>
<reference key="10">
    <citation type="journal article" date="2019" name="J. Immunol.">
        <title>USP19 Inhibits TNF-alpha- and IL-1beta-Triggered NF-kappaB Activation by Deubiquitinating TAK1.</title>
        <authorList>
            <person name="Lei C.Q."/>
            <person name="Wu X."/>
            <person name="Zhong X."/>
            <person name="Jiang L."/>
            <person name="Zhong B."/>
            <person name="Shu H.B."/>
        </authorList>
    </citation>
    <scope>FUNCTION</scope>
    <scope>DISRUPTION PHENOTYPE</scope>
</reference>
<evidence type="ECO:0000250" key="1"/>
<evidence type="ECO:0000250" key="2">
    <source>
        <dbReference type="UniProtKB" id="O94966"/>
    </source>
</evidence>
<evidence type="ECO:0000250" key="3">
    <source>
        <dbReference type="UniProtKB" id="Q6J1Y9"/>
    </source>
</evidence>
<evidence type="ECO:0000255" key="4"/>
<evidence type="ECO:0000255" key="5">
    <source>
        <dbReference type="PROSITE-ProRule" id="PRU00134"/>
    </source>
</evidence>
<evidence type="ECO:0000255" key="6">
    <source>
        <dbReference type="PROSITE-ProRule" id="PRU00547"/>
    </source>
</evidence>
<evidence type="ECO:0000255" key="7">
    <source>
        <dbReference type="PROSITE-ProRule" id="PRU10092"/>
    </source>
</evidence>
<evidence type="ECO:0000255" key="8">
    <source>
        <dbReference type="PROSITE-ProRule" id="PRU10093"/>
    </source>
</evidence>
<evidence type="ECO:0000256" key="9">
    <source>
        <dbReference type="SAM" id="MobiDB-lite"/>
    </source>
</evidence>
<evidence type="ECO:0000269" key="10">
    <source>
    </source>
</evidence>
<evidence type="ECO:0000269" key="11">
    <source>
    </source>
</evidence>
<evidence type="ECO:0000269" key="12">
    <source>
    </source>
</evidence>
<evidence type="ECO:0000269" key="13">
    <source>
    </source>
</evidence>
<evidence type="ECO:0000269" key="14">
    <source>
    </source>
</evidence>
<evidence type="ECO:0000269" key="15">
    <source>
    </source>
</evidence>
<evidence type="ECO:0000303" key="16">
    <source>
    </source>
</evidence>
<evidence type="ECO:0000303" key="17">
    <source>
    </source>
</evidence>
<evidence type="ECO:0000303" key="18">
    <source>
    </source>
</evidence>
<evidence type="ECO:0000305" key="19"/>
<evidence type="ECO:0007744" key="20">
    <source>
    </source>
</evidence>
<proteinExistence type="evidence at protein level"/>
<protein>
    <recommendedName>
        <fullName>Ubiquitin carboxyl-terminal hydrolase 19</fullName>
        <ecNumber evidence="11 13">3.4.19.12</ecNumber>
    </recommendedName>
    <alternativeName>
        <fullName>Deubiquitinating enzyme 19</fullName>
    </alternativeName>
    <alternativeName>
        <fullName>Ubiquitin thioesterase 19</fullName>
    </alternativeName>
    <alternativeName>
        <fullName>Ubiquitin-specific-processing protease 19</fullName>
    </alternativeName>
</protein>
<sequence length="1360" mass="150549">MSAGASATGPRRGPPGLEEATSKKKQKDRANLESKDGDARRVSLPRKEPTKDELLLDWRQSADEVIVKLRVGTGPVRLEDVDAAFTDTDCVVRLPDGRQWGGVFFAEIQSSCTKVQARKGGLLQLVLPKKVPLLTWPSLLKPLGTQELVPGLQCQENGQELSPIALEPGSEPRRAKQEARNQKRAQGRGEVGSGAGPGTQAGPSAKRAVHLRRGPEGEGSMDGPGPQGDAPSFLSDSATQVEAEEKLCAPPMNTQTSLLSSEKSLALLTVEKTVSPRNDPVAPVMVQDRDPEPEQEDQVKEEMALGADPTALVEEPESMVNLAFVKNDSYEKGPDSVVVHVYVKEIRRDSSRVLFREQDFTLIFQTRDGNFLRLHPGCGPHTIFRWQVKLRNLIEPEQCTFCFTASRIDICLRKRQSQRWGGLEAPATRGAVGGAKVAVPTGPTPLDSTPPGGGPHPLTGQEEARAVEKEKPKARSEDSGLDGVVARTPLEHVAPKPDPHLASPKPTCMVPPMPHSPVSGDSVEEDEEEEKKVCLPGFTGLVNLGNTCFMNSVIQSLSNTRELRDFFHDRSFEAEINYNNPLGTGGRLAIGFAVLLRALWKGTHQAFQPSKLKAIVASKASQFTGYAQHDAQEFMAFLLDGLHEDLNRIQNKPYTETVDSDGRPDEVVAEEAWQRHKMRNDSFIVDLFQGQYKSKLVCPVCAKVSITFDPFLYLPVPLPQKQKVLPIFYFAREPHSKPIKFLVSVSKENSSASEVLDSLSQSVHVKPENLRLAEVIKNRFHRVFLPSHSLDAVSPTDVLLCFELLSPELAKERVVVLEVQQRPQVPSIPISKCAACQRKQQSEEEKLKRCTRCYRVGYCNQFCQKTHWPDHKGLCRPENIGYPFLVSVPASRLTYARLAQLLEGYARYSVSVFQPPFQPGRMALESQSPGCTTLLSTSSLEAGDSEREPIQPSELQLVTPVAEGDTGAHRVWPPADRGPVPSTSGLSSEMLASGPIEGCPLLAGERVSRPEAAVPGYQHSSESVNTHTPQFFIYKIDASNREQRLEDKGETPLELGDDCSLALVWRNNERLQEFVLVASKELECAEDPGSAGEAARAGHFTLDQCLNLFTRPEVLAPEEAWYCPQCKQHREASKQLLLWRLPNVLIVQLKRFSFRSFIWRDKINDLVEFPVRNLDLSKFCIGQKEEQLPSYDLYAVINHYGGMIGGHYTACARLPNDRSSQRSDVGWRLFDDSTVTTVDESQVVTRYAYVLFYRRRNSPVERPPRASHSEHHPDLGPAAEAAASQASRIWQELEAEEEMVPEGPGPLGPWGPQDWVGPPPRGPTTPDEGCLRYFVLGTVAALVALVLNVFYPLVSQSRWR</sequence>
<organism>
    <name type="scientific">Mus musculus</name>
    <name type="common">Mouse</name>
    <dbReference type="NCBI Taxonomy" id="10090"/>
    <lineage>
        <taxon>Eukaryota</taxon>
        <taxon>Metazoa</taxon>
        <taxon>Chordata</taxon>
        <taxon>Craniata</taxon>
        <taxon>Vertebrata</taxon>
        <taxon>Euteleostomi</taxon>
        <taxon>Mammalia</taxon>
        <taxon>Eutheria</taxon>
        <taxon>Euarchontoglires</taxon>
        <taxon>Glires</taxon>
        <taxon>Rodentia</taxon>
        <taxon>Myomorpha</taxon>
        <taxon>Muroidea</taxon>
        <taxon>Muridae</taxon>
        <taxon>Murinae</taxon>
        <taxon>Mus</taxon>
        <taxon>Mus</taxon>
    </lineage>
</organism>
<dbReference type="EC" id="3.4.19.12" evidence="11 13"/>
<dbReference type="EMBL" id="AK122396">
    <property type="protein sequence ID" value="BAC65678.4"/>
    <property type="status" value="ALT_INIT"/>
    <property type="molecule type" value="mRNA"/>
</dbReference>
<dbReference type="EMBL" id="AK146504">
    <property type="protein sequence ID" value="BAE27219.1"/>
    <property type="molecule type" value="mRNA"/>
</dbReference>
<dbReference type="EMBL" id="AK160807">
    <property type="protein sequence ID" value="BAE36025.1"/>
    <property type="molecule type" value="mRNA"/>
</dbReference>
<dbReference type="EMBL" id="AK171942">
    <property type="protein sequence ID" value="BAE42739.1"/>
    <property type="molecule type" value="mRNA"/>
</dbReference>
<dbReference type="EMBL" id="BC046824">
    <property type="protein sequence ID" value="AAH46824.1"/>
    <property type="molecule type" value="mRNA"/>
</dbReference>
<dbReference type="EMBL" id="BC060613">
    <property type="protein sequence ID" value="AAH60613.1"/>
    <property type="molecule type" value="mRNA"/>
</dbReference>
<dbReference type="CCDS" id="CCDS23529.1">
    <molecule id="Q3UJD6-1"/>
</dbReference>
<dbReference type="CCDS" id="CCDS52924.1">
    <molecule id="Q3UJD6-2"/>
</dbReference>
<dbReference type="RefSeq" id="NP_001161843.1">
    <property type="nucleotide sequence ID" value="NM_001168371.2"/>
</dbReference>
<dbReference type="RefSeq" id="NP_001161844.1">
    <molecule id="Q3UJD6-2"/>
    <property type="nucleotide sequence ID" value="NM_001168372.2"/>
</dbReference>
<dbReference type="RefSeq" id="NP_001161845.1">
    <property type="nucleotide sequence ID" value="NM_001168373.2"/>
</dbReference>
<dbReference type="RefSeq" id="NP_082080.3">
    <molecule id="Q3UJD6-1"/>
    <property type="nucleotide sequence ID" value="NM_027804.4"/>
</dbReference>
<dbReference type="RefSeq" id="NP_663382.2">
    <property type="nucleotide sequence ID" value="NM_145407.3"/>
</dbReference>
<dbReference type="SMR" id="Q3UJD6"/>
<dbReference type="BioGRID" id="214730">
    <property type="interactions" value="17"/>
</dbReference>
<dbReference type="FunCoup" id="Q3UJD6">
    <property type="interactions" value="2278"/>
</dbReference>
<dbReference type="IntAct" id="Q3UJD6">
    <property type="interactions" value="26"/>
</dbReference>
<dbReference type="STRING" id="10090.ENSMUSP00000006854"/>
<dbReference type="MEROPS" id="C19.024"/>
<dbReference type="GlyGen" id="Q3UJD6">
    <property type="glycosylation" value="2 sites"/>
</dbReference>
<dbReference type="iPTMnet" id="Q3UJD6"/>
<dbReference type="PhosphoSitePlus" id="Q3UJD6"/>
<dbReference type="SwissPalm" id="Q3UJD6"/>
<dbReference type="jPOST" id="Q3UJD6"/>
<dbReference type="PaxDb" id="10090-ENSMUSP00000006854"/>
<dbReference type="PeptideAtlas" id="Q3UJD6"/>
<dbReference type="ProteomicsDB" id="298097">
    <molecule id="Q3UJD6-1"/>
</dbReference>
<dbReference type="ProteomicsDB" id="298098">
    <molecule id="Q3UJD6-2"/>
</dbReference>
<dbReference type="Pumba" id="Q3UJD6"/>
<dbReference type="Antibodypedia" id="30419">
    <property type="antibodies" value="184 antibodies from 32 providers"/>
</dbReference>
<dbReference type="DNASU" id="71472"/>
<dbReference type="Ensembl" id="ENSMUST00000006854.13">
    <molecule id="Q3UJD6-1"/>
    <property type="protein sequence ID" value="ENSMUSP00000006854.8"/>
    <property type="gene ID" value="ENSMUSG00000006676.18"/>
</dbReference>
<dbReference type="Ensembl" id="ENSMUST00000085044.14">
    <molecule id="Q3UJD6-2"/>
    <property type="protein sequence ID" value="ENSMUSP00000082119.8"/>
    <property type="gene ID" value="ENSMUSG00000006676.18"/>
</dbReference>
<dbReference type="GeneID" id="71472"/>
<dbReference type="KEGG" id="mmu:71472"/>
<dbReference type="UCSC" id="uc009rpt.2">
    <molecule id="Q3UJD6-1"/>
    <property type="organism name" value="mouse"/>
</dbReference>
<dbReference type="UCSC" id="uc009rpv.2">
    <molecule id="Q3UJD6-2"/>
    <property type="organism name" value="mouse"/>
</dbReference>
<dbReference type="AGR" id="MGI:1918722"/>
<dbReference type="CTD" id="10869"/>
<dbReference type="MGI" id="MGI:1918722">
    <property type="gene designation" value="Usp19"/>
</dbReference>
<dbReference type="VEuPathDB" id="HostDB:ENSMUSG00000006676"/>
<dbReference type="eggNOG" id="KOG1870">
    <property type="taxonomic scope" value="Eukaryota"/>
</dbReference>
<dbReference type="GeneTree" id="ENSGT00940000159085"/>
<dbReference type="InParanoid" id="Q3UJD6"/>
<dbReference type="OMA" id="RIWPQRV"/>
<dbReference type="OrthoDB" id="265776at2759"/>
<dbReference type="PhylomeDB" id="Q3UJD6"/>
<dbReference type="TreeFam" id="TF106276"/>
<dbReference type="BRENDA" id="3.4.19.12">
    <property type="organism ID" value="3474"/>
</dbReference>
<dbReference type="Reactome" id="R-MMU-5689880">
    <property type="pathway name" value="Ub-specific processing proteases"/>
</dbReference>
<dbReference type="BioGRID-ORCS" id="71472">
    <property type="hits" value="6 hits in 79 CRISPR screens"/>
</dbReference>
<dbReference type="ChiTaRS" id="Usp19">
    <property type="organism name" value="mouse"/>
</dbReference>
<dbReference type="PRO" id="PR:Q3UJD6"/>
<dbReference type="Proteomes" id="UP000000589">
    <property type="component" value="Chromosome 9"/>
</dbReference>
<dbReference type="RNAct" id="Q3UJD6">
    <property type="molecule type" value="protein"/>
</dbReference>
<dbReference type="Bgee" id="ENSMUSG00000006676">
    <property type="expression patterns" value="Expressed in secondary oocyte and 274 other cell types or tissues"/>
</dbReference>
<dbReference type="ExpressionAtlas" id="Q3UJD6">
    <property type="expression patterns" value="baseline and differential"/>
</dbReference>
<dbReference type="GO" id="GO:0005829">
    <property type="term" value="C:cytosol"/>
    <property type="evidence" value="ECO:0000314"/>
    <property type="project" value="UniProtKB"/>
</dbReference>
<dbReference type="GO" id="GO:0005789">
    <property type="term" value="C:endoplasmic reticulum membrane"/>
    <property type="evidence" value="ECO:0000250"/>
    <property type="project" value="UniProtKB"/>
</dbReference>
<dbReference type="GO" id="GO:0004843">
    <property type="term" value="F:cysteine-type deubiquitinase activity"/>
    <property type="evidence" value="ECO:0000315"/>
    <property type="project" value="UniProtKB"/>
</dbReference>
<dbReference type="GO" id="GO:1990380">
    <property type="term" value="F:K48-linked deubiquitinase activity"/>
    <property type="evidence" value="ECO:0000314"/>
    <property type="project" value="ParkinsonsUK-UCL"/>
</dbReference>
<dbReference type="GO" id="GO:0031625">
    <property type="term" value="F:ubiquitin protein ligase binding"/>
    <property type="evidence" value="ECO:0000353"/>
    <property type="project" value="ParkinsonsUK-UCL"/>
</dbReference>
<dbReference type="GO" id="GO:0008270">
    <property type="term" value="F:zinc ion binding"/>
    <property type="evidence" value="ECO:0007669"/>
    <property type="project" value="UniProtKB-KW"/>
</dbReference>
<dbReference type="GO" id="GO:0036503">
    <property type="term" value="P:ERAD pathway"/>
    <property type="evidence" value="ECO:0000250"/>
    <property type="project" value="UniProtKB"/>
</dbReference>
<dbReference type="GO" id="GO:1901799">
    <property type="term" value="P:negative regulation of proteasomal protein catabolic process"/>
    <property type="evidence" value="ECO:0000314"/>
    <property type="project" value="ParkinsonsUK-UCL"/>
</dbReference>
<dbReference type="GO" id="GO:0048642">
    <property type="term" value="P:negative regulation of skeletal muscle tissue development"/>
    <property type="evidence" value="ECO:0000315"/>
    <property type="project" value="UniProtKB"/>
</dbReference>
<dbReference type="GO" id="GO:0090068">
    <property type="term" value="P:positive regulation of cell cycle process"/>
    <property type="evidence" value="ECO:0000250"/>
    <property type="project" value="UniProtKB"/>
</dbReference>
<dbReference type="GO" id="GO:0016579">
    <property type="term" value="P:protein deubiquitination"/>
    <property type="evidence" value="ECO:0000250"/>
    <property type="project" value="UniProtKB"/>
</dbReference>
<dbReference type="GO" id="GO:0071108">
    <property type="term" value="P:protein K48-linked deubiquitination"/>
    <property type="evidence" value="ECO:0000314"/>
    <property type="project" value="ParkinsonsUK-UCL"/>
</dbReference>
<dbReference type="GO" id="GO:0050821">
    <property type="term" value="P:protein stabilization"/>
    <property type="evidence" value="ECO:0000314"/>
    <property type="project" value="ParkinsonsUK-UCL"/>
</dbReference>
<dbReference type="GO" id="GO:1900037">
    <property type="term" value="P:regulation of cellular response to hypoxia"/>
    <property type="evidence" value="ECO:0000250"/>
    <property type="project" value="UniProtKB"/>
</dbReference>
<dbReference type="GO" id="GO:0031647">
    <property type="term" value="P:regulation of protein stability"/>
    <property type="evidence" value="ECO:0000250"/>
    <property type="project" value="UniProtKB"/>
</dbReference>
<dbReference type="GO" id="GO:0034976">
    <property type="term" value="P:response to endoplasmic reticulum stress"/>
    <property type="evidence" value="ECO:0000250"/>
    <property type="project" value="UniProtKB"/>
</dbReference>
<dbReference type="CDD" id="cd06466">
    <property type="entry name" value="p23_CS_SGT1_like"/>
    <property type="match status" value="1"/>
</dbReference>
<dbReference type="CDD" id="cd06463">
    <property type="entry name" value="p23_like"/>
    <property type="match status" value="1"/>
</dbReference>
<dbReference type="CDD" id="cd02674">
    <property type="entry name" value="Peptidase_C19R"/>
    <property type="match status" value="1"/>
</dbReference>
<dbReference type="FunFam" id="3.90.70.10:FF:000012">
    <property type="entry name" value="ubiquitin carboxyl-terminal hydrolase 19 isoform X2"/>
    <property type="match status" value="1"/>
</dbReference>
<dbReference type="FunFam" id="3.90.70.10:FF:000020">
    <property type="entry name" value="ubiquitin carboxyl-terminal hydrolase 19 isoform X4"/>
    <property type="match status" value="1"/>
</dbReference>
<dbReference type="FunFam" id="2.60.40.790:FF:000004">
    <property type="entry name" value="ubiquitin carboxyl-terminal hydrolase 19 isoform X9"/>
    <property type="match status" value="1"/>
</dbReference>
<dbReference type="FunFam" id="6.10.140.2220:FF:000004">
    <property type="entry name" value="ubiquitin carboxyl-terminal hydrolase 19 isoform X9"/>
    <property type="match status" value="1"/>
</dbReference>
<dbReference type="Gene3D" id="2.60.40.790">
    <property type="match status" value="2"/>
</dbReference>
<dbReference type="Gene3D" id="6.10.140.2220">
    <property type="match status" value="1"/>
</dbReference>
<dbReference type="Gene3D" id="3.90.70.10">
    <property type="entry name" value="Cysteine proteinases"/>
    <property type="match status" value="2"/>
</dbReference>
<dbReference type="InterPro" id="IPR007052">
    <property type="entry name" value="CS_dom"/>
</dbReference>
<dbReference type="InterPro" id="IPR008978">
    <property type="entry name" value="HSP20-like_chaperone"/>
</dbReference>
<dbReference type="InterPro" id="IPR038765">
    <property type="entry name" value="Papain-like_cys_pep_sf"/>
</dbReference>
<dbReference type="InterPro" id="IPR001394">
    <property type="entry name" value="Peptidase_C19_UCH"/>
</dbReference>
<dbReference type="InterPro" id="IPR050185">
    <property type="entry name" value="Ub_carboxyl-term_hydrolase"/>
</dbReference>
<dbReference type="InterPro" id="IPR018200">
    <property type="entry name" value="USP_CS"/>
</dbReference>
<dbReference type="InterPro" id="IPR028889">
    <property type="entry name" value="USP_dom"/>
</dbReference>
<dbReference type="InterPro" id="IPR002893">
    <property type="entry name" value="Znf_MYND"/>
</dbReference>
<dbReference type="PANTHER" id="PTHR21646">
    <property type="entry name" value="UBIQUITIN CARBOXYL-TERMINAL HYDROLASE"/>
    <property type="match status" value="1"/>
</dbReference>
<dbReference type="PANTHER" id="PTHR21646:SF74">
    <property type="entry name" value="UBIQUITIN CARBOXYL-TERMINAL HYDROLASE 19"/>
    <property type="match status" value="1"/>
</dbReference>
<dbReference type="Pfam" id="PF04969">
    <property type="entry name" value="CS"/>
    <property type="match status" value="2"/>
</dbReference>
<dbReference type="Pfam" id="PF00443">
    <property type="entry name" value="UCH"/>
    <property type="match status" value="1"/>
</dbReference>
<dbReference type="Pfam" id="PF16602">
    <property type="entry name" value="USP19_linker"/>
    <property type="match status" value="1"/>
</dbReference>
<dbReference type="Pfam" id="PF01753">
    <property type="entry name" value="zf-MYND"/>
    <property type="match status" value="1"/>
</dbReference>
<dbReference type="SUPFAM" id="SSF54001">
    <property type="entry name" value="Cysteine proteinases"/>
    <property type="match status" value="1"/>
</dbReference>
<dbReference type="SUPFAM" id="SSF144232">
    <property type="entry name" value="HIT/MYND zinc finger-like"/>
    <property type="match status" value="1"/>
</dbReference>
<dbReference type="SUPFAM" id="SSF49764">
    <property type="entry name" value="HSP20-like chaperones"/>
    <property type="match status" value="2"/>
</dbReference>
<dbReference type="PROSITE" id="PS51203">
    <property type="entry name" value="CS"/>
    <property type="match status" value="2"/>
</dbReference>
<dbReference type="PROSITE" id="PS00972">
    <property type="entry name" value="USP_1"/>
    <property type="match status" value="1"/>
</dbReference>
<dbReference type="PROSITE" id="PS00973">
    <property type="entry name" value="USP_2"/>
    <property type="match status" value="1"/>
</dbReference>
<dbReference type="PROSITE" id="PS50235">
    <property type="entry name" value="USP_3"/>
    <property type="match status" value="1"/>
</dbReference>
<dbReference type="PROSITE" id="PS01360">
    <property type="entry name" value="ZF_MYND_1"/>
    <property type="match status" value="1"/>
</dbReference>
<dbReference type="PROSITE" id="PS50865">
    <property type="entry name" value="ZF_MYND_2"/>
    <property type="match status" value="1"/>
</dbReference>
<gene>
    <name type="primary">Usp19</name>
    <name type="synonym">Kiaa0891</name>
</gene>
<keyword id="KW-0025">Alternative splicing</keyword>
<keyword id="KW-0256">Endoplasmic reticulum</keyword>
<keyword id="KW-0378">Hydrolase</keyword>
<keyword id="KW-0472">Membrane</keyword>
<keyword id="KW-0479">Metal-binding</keyword>
<keyword id="KW-0597">Phosphoprotein</keyword>
<keyword id="KW-0645">Protease</keyword>
<keyword id="KW-1185">Reference proteome</keyword>
<keyword id="KW-0677">Repeat</keyword>
<keyword id="KW-0788">Thiol protease</keyword>
<keyword id="KW-0812">Transmembrane</keyword>
<keyword id="KW-1133">Transmembrane helix</keyword>
<keyword id="KW-0833">Ubl conjugation pathway</keyword>
<keyword id="KW-0862">Zinc</keyword>
<keyword id="KW-0863">Zinc-finger</keyword>
<comment type="function">
    <text evidence="2 3 10 11 12 13 14 15">Deubiquitinating enzyme that regulates the degradation of various proteins by removing ubiquitin moieties, thereby preventing their proteasomal degradation. Stabilizes RNF123, which promotes CDKN1B degradation and contributes to cell proliferation (By similarity). Decreases the levels of ubiquitinated proteins during skeletal muscle formation and acts to repress myogenesis (PubMed:25568336). Modulates transcription of major myofibrillar proteins. Also involved in turnover of endoplasmic-reticulum-associated degradation (ERAD) substrates (PubMed:25088257, PubMed:27827840). Mechanistically, deubiquitinates and thereby stabilizes several E3 ligases involved in the ERAD pathway including SYVN1 or MARCHF6 (PubMed:25088257, PubMed:27827840). Regulates the stability of other E3 ligases including BIRC2/c-IAP1 and BIRC3/c-IAP2 by preventing their ubiquitination. Required for cells to mount an appropriate response to hypoxia by rescuing HIF1A from degradation in a non-catalytic manner and by mediating the deubiquitination of FUNDC1. Attenuates mitochondrial damage and ferroptosis by targeting and stabilizing NADPH oxidase 4/NOX4 (By similarity). Negatively regulates TNF-alpha- and IL-1beta-triggered NF-kappa-B activation by hydrolyzing 'Lys-27'- and 'Lys-63'-linked polyubiquitin chains from MAP3K7 (PubMed:31127032). Modulates also the protein level and aggregation of polyQ-expanded huntingtin/HTT through HSP90AA1 (By similarity).</text>
</comment>
<comment type="catalytic activity">
    <reaction evidence="11 13">
        <text>Thiol-dependent hydrolysis of ester, thioester, amide, peptide and isopeptide bonds formed by the C-terminal Gly of ubiquitin (a 76-residue protein attached to proteins as an intracellular targeting signal).</text>
        <dbReference type="EC" id="3.4.19.12"/>
    </reaction>
</comment>
<comment type="subunit">
    <text evidence="1 2">Interacts with RNF123 (By similarity). Interacts with BIRC2/c-IAP1, BIRC3/c-IAP2 and XIAP/BIRC4. Interacts with HIF1A (via N-terminus) (By similarity).</text>
</comment>
<comment type="interaction">
    <interactant intactId="EBI-9359023">
        <id>Q3UJD6-2</id>
    </interactant>
    <interactant intactId="EBI-744771">
        <id>O75344</id>
        <label>FKBP6</label>
    </interactant>
    <organismsDiffer>true</organismsDiffer>
    <experiments>2</experiments>
</comment>
<comment type="subcellular location">
    <subcellularLocation>
        <location evidence="2">Endoplasmic reticulum membrane</location>
        <topology evidence="2">Single-pass membrane protein</topology>
    </subcellularLocation>
    <text evidence="2">Accumulates in the mitochondria-associated ER membrane (MAM) in response to hypoxia.</text>
</comment>
<comment type="alternative products">
    <event type="alternative splicing"/>
    <isoform>
        <id>Q3UJD6-1</id>
        <name>1</name>
        <sequence type="displayed"/>
    </isoform>
    <isoform>
        <id>Q3UJD6-2</id>
        <name>2</name>
        <sequence type="described" ref="VSP_026769 VSP_026770"/>
    </isoform>
</comment>
<comment type="induction">
    <text evidence="10">Up-regulated by ESR1 in the presence of 17 beta-estradiol (E2).</text>
</comment>
<comment type="disruption phenotype">
    <text evidence="12 15">Usp19 knockout-mice display enhanced muscle regeneration following cardiotoxin-induced muscle injury (PubMed:25568336). In addition, these mice are more susceptible to TNF-alpha- and IL-1beta-induced septicemia death (PubMed:31127032).</text>
</comment>
<comment type="sequence caution" evidence="19">
    <conflict type="erroneous initiation">
        <sequence resource="EMBL-CDS" id="BAC65678"/>
    </conflict>
</comment>